<dbReference type="EC" id="2.1.1.33" evidence="2"/>
<dbReference type="EMBL" id="AAFW02000145">
    <property type="protein sequence ID" value="EDN60162.1"/>
    <property type="molecule type" value="Genomic_DNA"/>
</dbReference>
<dbReference type="SMR" id="A6ZXD2"/>
<dbReference type="HOGENOM" id="CLU_050910_3_1_1"/>
<dbReference type="UniPathway" id="UPA00989"/>
<dbReference type="Proteomes" id="UP000007060">
    <property type="component" value="Unassembled WGS sequence"/>
</dbReference>
<dbReference type="GO" id="GO:0005634">
    <property type="term" value="C:nucleus"/>
    <property type="evidence" value="ECO:0007669"/>
    <property type="project" value="UniProtKB-SubCell"/>
</dbReference>
<dbReference type="GO" id="GO:0043527">
    <property type="term" value="C:tRNA methyltransferase complex"/>
    <property type="evidence" value="ECO:0007669"/>
    <property type="project" value="TreeGrafter"/>
</dbReference>
<dbReference type="GO" id="GO:0008176">
    <property type="term" value="F:tRNA (guanine(46)-N7)-methyltransferase activity"/>
    <property type="evidence" value="ECO:0007669"/>
    <property type="project" value="UniProtKB-UniRule"/>
</dbReference>
<dbReference type="GO" id="GO:0000049">
    <property type="term" value="F:tRNA binding"/>
    <property type="evidence" value="ECO:0007669"/>
    <property type="project" value="UniProtKB-UniRule"/>
</dbReference>
<dbReference type="CDD" id="cd02440">
    <property type="entry name" value="AdoMet_MTases"/>
    <property type="match status" value="1"/>
</dbReference>
<dbReference type="FunFam" id="3.40.50.150:FF:000060">
    <property type="entry name" value="tRNA (guanine-N(7)-)-methyltransferase"/>
    <property type="match status" value="1"/>
</dbReference>
<dbReference type="Gene3D" id="3.40.50.150">
    <property type="entry name" value="Vaccinia Virus protein VP39"/>
    <property type="match status" value="1"/>
</dbReference>
<dbReference type="HAMAP" id="MF_03055">
    <property type="entry name" value="tRNA_methyltr_TrmB_euk"/>
    <property type="match status" value="1"/>
</dbReference>
<dbReference type="InterPro" id="IPR029063">
    <property type="entry name" value="SAM-dependent_MTases_sf"/>
</dbReference>
<dbReference type="InterPro" id="IPR025763">
    <property type="entry name" value="Trm8_euk"/>
</dbReference>
<dbReference type="InterPro" id="IPR003358">
    <property type="entry name" value="tRNA_(Gua-N-7)_MeTrfase_Trmb"/>
</dbReference>
<dbReference type="NCBIfam" id="TIGR00091">
    <property type="entry name" value="tRNA (guanosine(46)-N7)-methyltransferase TrmB"/>
    <property type="match status" value="1"/>
</dbReference>
<dbReference type="PANTHER" id="PTHR23417">
    <property type="entry name" value="3-DEOXY-D-MANNO-OCTULOSONIC-ACID TRANSFERASE/TRNA GUANINE-N 7 - -METHYLTRANSFERASE"/>
    <property type="match status" value="1"/>
</dbReference>
<dbReference type="PANTHER" id="PTHR23417:SF16">
    <property type="entry name" value="TRNA (GUANINE-N(7)-)-METHYLTRANSFERASE"/>
    <property type="match status" value="1"/>
</dbReference>
<dbReference type="Pfam" id="PF02390">
    <property type="entry name" value="Methyltransf_4"/>
    <property type="match status" value="1"/>
</dbReference>
<dbReference type="SUPFAM" id="SSF53335">
    <property type="entry name" value="S-adenosyl-L-methionine-dependent methyltransferases"/>
    <property type="match status" value="1"/>
</dbReference>
<dbReference type="PROSITE" id="PS51625">
    <property type="entry name" value="SAM_MT_TRMB"/>
    <property type="match status" value="1"/>
</dbReference>
<organism>
    <name type="scientific">Saccharomyces cerevisiae (strain YJM789)</name>
    <name type="common">Baker's yeast</name>
    <dbReference type="NCBI Taxonomy" id="307796"/>
    <lineage>
        <taxon>Eukaryota</taxon>
        <taxon>Fungi</taxon>
        <taxon>Dikarya</taxon>
        <taxon>Ascomycota</taxon>
        <taxon>Saccharomycotina</taxon>
        <taxon>Saccharomycetes</taxon>
        <taxon>Saccharomycetales</taxon>
        <taxon>Saccharomycetaceae</taxon>
        <taxon>Saccharomyces</taxon>
    </lineage>
</organism>
<accession>A6ZXD2</accession>
<name>TRMB_YEAS7</name>
<proteinExistence type="inferred from homology"/>
<feature type="chain" id="PRO_0000370608" description="tRNA (guanine-N(7)-)-methyltransferase">
    <location>
        <begin position="1"/>
        <end position="286"/>
    </location>
</feature>
<feature type="active site" evidence="2">
    <location>
        <position position="184"/>
    </location>
</feature>
<feature type="binding site" evidence="2">
    <location>
        <position position="103"/>
    </location>
    <ligand>
        <name>S-adenosyl-L-methionine</name>
        <dbReference type="ChEBI" id="CHEBI:59789"/>
    </ligand>
</feature>
<feature type="binding site" evidence="2">
    <location>
        <begin position="126"/>
        <end position="127"/>
    </location>
    <ligand>
        <name>S-adenosyl-L-methionine</name>
        <dbReference type="ChEBI" id="CHEBI:59789"/>
    </ligand>
</feature>
<feature type="binding site" evidence="2">
    <location>
        <begin position="161"/>
        <end position="162"/>
    </location>
    <ligand>
        <name>S-adenosyl-L-methionine</name>
        <dbReference type="ChEBI" id="CHEBI:59789"/>
    </ligand>
</feature>
<feature type="binding site" evidence="2">
    <location>
        <position position="181"/>
    </location>
    <ligand>
        <name>S-adenosyl-L-methionine</name>
        <dbReference type="ChEBI" id="CHEBI:59789"/>
    </ligand>
</feature>
<feature type="binding site" evidence="2">
    <location>
        <begin position="259"/>
        <end position="261"/>
    </location>
    <ligand>
        <name>S-adenosyl-L-methionine</name>
        <dbReference type="ChEBI" id="CHEBI:59789"/>
    </ligand>
</feature>
<feature type="modified residue" description="Phosphoserine" evidence="1">
    <location>
        <position position="7"/>
    </location>
</feature>
<feature type="modified residue" description="Phosphoserine" evidence="1">
    <location>
        <position position="59"/>
    </location>
</feature>
<evidence type="ECO:0000250" key="1">
    <source>
        <dbReference type="UniProtKB" id="Q12009"/>
    </source>
</evidence>
<evidence type="ECO:0000255" key="2">
    <source>
        <dbReference type="HAMAP-Rule" id="MF_03055"/>
    </source>
</evidence>
<reference key="1">
    <citation type="journal article" date="2007" name="Proc. Natl. Acad. Sci. U.S.A.">
        <title>Genome sequencing and comparative analysis of Saccharomyces cerevisiae strain YJM789.</title>
        <authorList>
            <person name="Wei W."/>
            <person name="McCusker J.H."/>
            <person name="Hyman R.W."/>
            <person name="Jones T."/>
            <person name="Ning Y."/>
            <person name="Cao Z."/>
            <person name="Gu Z."/>
            <person name="Bruno D."/>
            <person name="Miranda M."/>
            <person name="Nguyen M."/>
            <person name="Wilhelmy J."/>
            <person name="Komp C."/>
            <person name="Tamse R."/>
            <person name="Wang X."/>
            <person name="Jia P."/>
            <person name="Luedi P."/>
            <person name="Oefner P.J."/>
            <person name="David L."/>
            <person name="Dietrich F.S."/>
            <person name="Li Y."/>
            <person name="Davis R.W."/>
            <person name="Steinmetz L.M."/>
        </authorList>
    </citation>
    <scope>NUCLEOTIDE SEQUENCE [LARGE SCALE GENOMIC DNA]</scope>
    <source>
        <strain>YJM789</strain>
    </source>
</reference>
<keyword id="KW-0489">Methyltransferase</keyword>
<keyword id="KW-0539">Nucleus</keyword>
<keyword id="KW-0597">Phosphoprotein</keyword>
<keyword id="KW-0694">RNA-binding</keyword>
<keyword id="KW-0949">S-adenosyl-L-methionine</keyword>
<keyword id="KW-0808">Transferase</keyword>
<keyword id="KW-0819">tRNA processing</keyword>
<keyword id="KW-0820">tRNA-binding</keyword>
<gene>
    <name evidence="2" type="primary">TRM8</name>
    <name type="ORF">SCY_0720</name>
</gene>
<sequence length="286" mass="33391">MKAKPLSQDPGSKRYAYRINKEENRKELKHVKINESSLVQEGQKIDLPKKRYYRQRAHSNPFSDHQLEYPVSPQDMDWSKLYPYYKNAENGQMTKKVTIADIGCGFGGLMIDLSPAFPEDLILGMEIRVQVTNYVEDRIIALRNNTASKHGFQNINVLRGNAMKFLPNFFEKGQLSKMFFCFPDPHFKQRKHKARIITNTLLSEYAYVLKEGGVVYTITDVKDLHEWMVKHLEEHPLFERLSKEWEENDECVQIMRNATEEGKKVERKKGDKFVACFTRLPTPAIL</sequence>
<comment type="function">
    <text evidence="2">Methyltransferase that catalyzes the formation of N(7)-methylguanine at position 46 (m7G46) in tRNA, a modification required to maintain stability of tRNAs; its absence resulting in tRNA decay. Both the D-stem and T-stem structures of tRNAs are required for efficient methyltransferase activity.</text>
</comment>
<comment type="catalytic activity">
    <reaction evidence="2">
        <text>guanosine(46) in tRNA + S-adenosyl-L-methionine = N(7)-methylguanosine(46) in tRNA + S-adenosyl-L-homocysteine</text>
        <dbReference type="Rhea" id="RHEA:42708"/>
        <dbReference type="Rhea" id="RHEA-COMP:10188"/>
        <dbReference type="Rhea" id="RHEA-COMP:10189"/>
        <dbReference type="ChEBI" id="CHEBI:57856"/>
        <dbReference type="ChEBI" id="CHEBI:59789"/>
        <dbReference type="ChEBI" id="CHEBI:74269"/>
        <dbReference type="ChEBI" id="CHEBI:74480"/>
        <dbReference type="EC" id="2.1.1.33"/>
    </reaction>
</comment>
<comment type="pathway">
    <text evidence="2">tRNA modification; N(7)-methylguanine-tRNA biosynthesis.</text>
</comment>
<comment type="subunit">
    <text evidence="2">Forms a complex with TRM82.</text>
</comment>
<comment type="subcellular location">
    <subcellularLocation>
        <location evidence="2">Nucleus</location>
    </subcellularLocation>
</comment>
<comment type="similarity">
    <text evidence="2">Belongs to the class I-like SAM-binding methyltransferase superfamily. TrmB family.</text>
</comment>
<protein>
    <recommendedName>
        <fullName evidence="2">tRNA (guanine-N(7)-)-methyltransferase</fullName>
        <ecNumber evidence="2">2.1.1.33</ecNumber>
    </recommendedName>
    <alternativeName>
        <fullName evidence="2">Transfer RNA methyltransferase 8</fullName>
    </alternativeName>
    <alternativeName>
        <fullName evidence="2">tRNA (guanine(46)-N(7))-methyltransferase</fullName>
    </alternativeName>
    <alternativeName>
        <fullName evidence="2">tRNA(m7G46)-methyltransferase</fullName>
    </alternativeName>
</protein>